<accession>F4JCY2</accession>
<accession>Q9M1H6</accession>
<reference key="1">
    <citation type="journal article" date="2000" name="Nature">
        <title>Sequence and analysis of chromosome 3 of the plant Arabidopsis thaliana.</title>
        <authorList>
            <person name="Salanoubat M."/>
            <person name="Lemcke K."/>
            <person name="Rieger M."/>
            <person name="Ansorge W."/>
            <person name="Unseld M."/>
            <person name="Fartmann B."/>
            <person name="Valle G."/>
            <person name="Bloecker H."/>
            <person name="Perez-Alonso M."/>
            <person name="Obermaier B."/>
            <person name="Delseny M."/>
            <person name="Boutry M."/>
            <person name="Grivell L.A."/>
            <person name="Mache R."/>
            <person name="Puigdomenech P."/>
            <person name="De Simone V."/>
            <person name="Choisne N."/>
            <person name="Artiguenave F."/>
            <person name="Robert C."/>
            <person name="Brottier P."/>
            <person name="Wincker P."/>
            <person name="Cattolico L."/>
            <person name="Weissenbach J."/>
            <person name="Saurin W."/>
            <person name="Quetier F."/>
            <person name="Schaefer M."/>
            <person name="Mueller-Auer S."/>
            <person name="Gabel C."/>
            <person name="Fuchs M."/>
            <person name="Benes V."/>
            <person name="Wurmbach E."/>
            <person name="Drzonek H."/>
            <person name="Erfle H."/>
            <person name="Jordan N."/>
            <person name="Bangert S."/>
            <person name="Wiedelmann R."/>
            <person name="Kranz H."/>
            <person name="Voss H."/>
            <person name="Holland R."/>
            <person name="Brandt P."/>
            <person name="Nyakatura G."/>
            <person name="Vezzi A."/>
            <person name="D'Angelo M."/>
            <person name="Pallavicini A."/>
            <person name="Toppo S."/>
            <person name="Simionati B."/>
            <person name="Conrad A."/>
            <person name="Hornischer K."/>
            <person name="Kauer G."/>
            <person name="Loehnert T.-H."/>
            <person name="Nordsiek G."/>
            <person name="Reichelt J."/>
            <person name="Scharfe M."/>
            <person name="Schoen O."/>
            <person name="Bargues M."/>
            <person name="Terol J."/>
            <person name="Climent J."/>
            <person name="Navarro P."/>
            <person name="Collado C."/>
            <person name="Perez-Perez A."/>
            <person name="Ottenwaelder B."/>
            <person name="Duchemin D."/>
            <person name="Cooke R."/>
            <person name="Laudie M."/>
            <person name="Berger-Llauro C."/>
            <person name="Purnelle B."/>
            <person name="Masuy D."/>
            <person name="de Haan M."/>
            <person name="Maarse A.C."/>
            <person name="Alcaraz J.-P."/>
            <person name="Cottet A."/>
            <person name="Casacuberta E."/>
            <person name="Monfort A."/>
            <person name="Argiriou A."/>
            <person name="Flores M."/>
            <person name="Liguori R."/>
            <person name="Vitale D."/>
            <person name="Mannhaupt G."/>
            <person name="Haase D."/>
            <person name="Schoof H."/>
            <person name="Rudd S."/>
            <person name="Zaccaria P."/>
            <person name="Mewes H.-W."/>
            <person name="Mayer K.F.X."/>
            <person name="Kaul S."/>
            <person name="Town C.D."/>
            <person name="Koo H.L."/>
            <person name="Tallon L.J."/>
            <person name="Jenkins J."/>
            <person name="Rooney T."/>
            <person name="Rizzo M."/>
            <person name="Walts A."/>
            <person name="Utterback T."/>
            <person name="Fujii C.Y."/>
            <person name="Shea T.P."/>
            <person name="Creasy T.H."/>
            <person name="Haas B."/>
            <person name="Maiti R."/>
            <person name="Wu D."/>
            <person name="Peterson J."/>
            <person name="Van Aken S."/>
            <person name="Pai G."/>
            <person name="Militscher J."/>
            <person name="Sellers P."/>
            <person name="Gill J.E."/>
            <person name="Feldblyum T.V."/>
            <person name="Preuss D."/>
            <person name="Lin X."/>
            <person name="Nierman W.C."/>
            <person name="Salzberg S.L."/>
            <person name="White O."/>
            <person name="Venter J.C."/>
            <person name="Fraser C.M."/>
            <person name="Kaneko T."/>
            <person name="Nakamura Y."/>
            <person name="Sato S."/>
            <person name="Kato T."/>
            <person name="Asamizu E."/>
            <person name="Sasamoto S."/>
            <person name="Kimura T."/>
            <person name="Idesawa K."/>
            <person name="Kawashima K."/>
            <person name="Kishida Y."/>
            <person name="Kiyokawa C."/>
            <person name="Kohara M."/>
            <person name="Matsumoto M."/>
            <person name="Matsuno A."/>
            <person name="Muraki A."/>
            <person name="Nakayama S."/>
            <person name="Nakazaki N."/>
            <person name="Shinpo S."/>
            <person name="Takeuchi C."/>
            <person name="Wada T."/>
            <person name="Watanabe A."/>
            <person name="Yamada M."/>
            <person name="Yasuda M."/>
            <person name="Tabata S."/>
        </authorList>
    </citation>
    <scope>NUCLEOTIDE SEQUENCE [LARGE SCALE GENOMIC DNA]</scope>
    <source>
        <strain>cv. Columbia</strain>
    </source>
</reference>
<reference key="2">
    <citation type="journal article" date="2017" name="Plant J.">
        <title>Araport11: a complete reannotation of the Arabidopsis thaliana reference genome.</title>
        <authorList>
            <person name="Cheng C.Y."/>
            <person name="Krishnakumar V."/>
            <person name="Chan A.P."/>
            <person name="Thibaud-Nissen F."/>
            <person name="Schobel S."/>
            <person name="Town C.D."/>
        </authorList>
    </citation>
    <scope>GENOME REANNOTATION</scope>
    <source>
        <strain>cv. Columbia</strain>
    </source>
</reference>
<reference key="3">
    <citation type="journal article" date="2014" name="Cell Res.">
        <title>DUF221 proteins are a family of osmosensitive calcium-permeable cation channels conserved across eukaryotes.</title>
        <authorList>
            <person name="Hou C."/>
            <person name="Tian W."/>
            <person name="Kleist T."/>
            <person name="He K."/>
            <person name="Garcia V."/>
            <person name="Bai F."/>
            <person name="Hao Y."/>
            <person name="Luan S."/>
            <person name="Li L."/>
        </authorList>
    </citation>
    <scope>GENE FAMILY</scope>
</reference>
<reference key="4">
    <citation type="journal article" date="2014" name="Nature">
        <title>OSCA1 mediates osmotic-stress-evoked Ca(2+) increases vital for osmosensing in Arabidopsis.</title>
        <authorList>
            <person name="Yuan F."/>
            <person name="Yang H."/>
            <person name="Xue Y."/>
            <person name="Kong D."/>
            <person name="Ye R."/>
            <person name="Li C."/>
            <person name="Zhang J."/>
            <person name="Theprungsirikul L."/>
            <person name="Shrift T."/>
            <person name="Krichilsky B."/>
            <person name="Johnson D.M."/>
            <person name="Swift G.B."/>
            <person name="He Y."/>
            <person name="Siedow J.N."/>
            <person name="Pei Z.M."/>
        </authorList>
    </citation>
    <scope>GENE FAMILY</scope>
</reference>
<protein>
    <recommendedName>
        <fullName evidence="3">Hyperosmolality-gated Ca2+ permeable channel 2.5</fullName>
        <shortName evidence="3">AtOSCA2.5</shortName>
    </recommendedName>
</protein>
<proteinExistence type="inferred from homology"/>
<dbReference type="EMBL" id="AL138656">
    <property type="protein sequence ID" value="CAB77571.1"/>
    <property type="status" value="ALT_SEQ"/>
    <property type="molecule type" value="Genomic_DNA"/>
</dbReference>
<dbReference type="EMBL" id="CP002686">
    <property type="protein sequence ID" value="AEE79244.1"/>
    <property type="molecule type" value="Genomic_DNA"/>
</dbReference>
<dbReference type="PIR" id="T47610">
    <property type="entry name" value="T47610"/>
</dbReference>
<dbReference type="RefSeq" id="NP_001118837.1">
    <molecule id="F4JCY2-1"/>
    <property type="nucleotide sequence ID" value="NM_001125365.2"/>
</dbReference>
<dbReference type="SMR" id="F4JCY2"/>
<dbReference type="FunCoup" id="F4JCY2">
    <property type="interactions" value="518"/>
</dbReference>
<dbReference type="STRING" id="3702.F4JCY2"/>
<dbReference type="iPTMnet" id="F4JCY2"/>
<dbReference type="PaxDb" id="3702-AT3G54510.2"/>
<dbReference type="ProteomicsDB" id="222771">
    <molecule id="F4JCY2-1"/>
</dbReference>
<dbReference type="EnsemblPlants" id="AT3G54510.2">
    <molecule id="F4JCY2-1"/>
    <property type="protein sequence ID" value="AT3G54510.2"/>
    <property type="gene ID" value="AT3G54510"/>
</dbReference>
<dbReference type="GeneID" id="824616"/>
<dbReference type="Gramene" id="AT3G54510.2">
    <molecule id="F4JCY2-1"/>
    <property type="protein sequence ID" value="AT3G54510.2"/>
    <property type="gene ID" value="AT3G54510"/>
</dbReference>
<dbReference type="KEGG" id="ath:AT3G54510"/>
<dbReference type="Araport" id="AT3G54510"/>
<dbReference type="TAIR" id="AT3G54510"/>
<dbReference type="eggNOG" id="KOG1134">
    <property type="taxonomic scope" value="Eukaryota"/>
</dbReference>
<dbReference type="HOGENOM" id="CLU_002458_7_1_1"/>
<dbReference type="InParanoid" id="F4JCY2"/>
<dbReference type="OMA" id="AYKPPWM"/>
<dbReference type="OrthoDB" id="1689567at2759"/>
<dbReference type="PRO" id="PR:F4JCY2"/>
<dbReference type="Proteomes" id="UP000006548">
    <property type="component" value="Chromosome 3"/>
</dbReference>
<dbReference type="ExpressionAtlas" id="F4JCY2">
    <property type="expression patterns" value="baseline and differential"/>
</dbReference>
<dbReference type="GO" id="GO:0016020">
    <property type="term" value="C:membrane"/>
    <property type="evidence" value="ECO:0007669"/>
    <property type="project" value="UniProtKB-SubCell"/>
</dbReference>
<dbReference type="GO" id="GO:0005227">
    <property type="term" value="F:calcium-activated cation channel activity"/>
    <property type="evidence" value="ECO:0007669"/>
    <property type="project" value="InterPro"/>
</dbReference>
<dbReference type="InterPro" id="IPR045122">
    <property type="entry name" value="Csc1-like"/>
</dbReference>
<dbReference type="InterPro" id="IPR003864">
    <property type="entry name" value="CSC1/OSCA1-like_7TM"/>
</dbReference>
<dbReference type="InterPro" id="IPR027815">
    <property type="entry name" value="CSC1/OSCA1-like_cyt"/>
</dbReference>
<dbReference type="InterPro" id="IPR032880">
    <property type="entry name" value="Csc1/OSCA1-like_N"/>
</dbReference>
<dbReference type="PANTHER" id="PTHR13018:SF141">
    <property type="entry name" value="OS01G0950900 PROTEIN"/>
    <property type="match status" value="1"/>
</dbReference>
<dbReference type="PANTHER" id="PTHR13018">
    <property type="entry name" value="PROBABLE MEMBRANE PROTEIN DUF221-RELATED"/>
    <property type="match status" value="1"/>
</dbReference>
<dbReference type="Pfam" id="PF14703">
    <property type="entry name" value="PHM7_cyt"/>
    <property type="match status" value="1"/>
</dbReference>
<dbReference type="Pfam" id="PF02714">
    <property type="entry name" value="RSN1_7TM"/>
    <property type="match status" value="1"/>
</dbReference>
<dbReference type="Pfam" id="PF13967">
    <property type="entry name" value="RSN1_TM"/>
    <property type="match status" value="1"/>
</dbReference>
<feature type="chain" id="PRO_0000429806" description="Hyperosmolality-gated Ca2+ permeable channel 2.5">
    <location>
        <begin position="1"/>
        <end position="712"/>
    </location>
</feature>
<feature type="transmembrane region" description="Helical" evidence="2">
    <location>
        <begin position="6"/>
        <end position="26"/>
    </location>
</feature>
<feature type="transmembrane region" description="Helical" evidence="2">
    <location>
        <begin position="94"/>
        <end position="114"/>
    </location>
</feature>
<feature type="transmembrane region" description="Helical" evidence="2">
    <location>
        <begin position="146"/>
        <end position="166"/>
    </location>
</feature>
<feature type="transmembrane region" description="Helical" evidence="2">
    <location>
        <begin position="351"/>
        <end position="371"/>
    </location>
</feature>
<feature type="transmembrane region" description="Helical" evidence="2">
    <location>
        <begin position="407"/>
        <end position="427"/>
    </location>
</feature>
<feature type="transmembrane region" description="Helical" evidence="2">
    <location>
        <begin position="442"/>
        <end position="462"/>
    </location>
</feature>
<feature type="transmembrane region" description="Helical" evidence="2">
    <location>
        <begin position="494"/>
        <end position="514"/>
    </location>
</feature>
<feature type="transmembrane region" description="Helical" evidence="2">
    <location>
        <begin position="546"/>
        <end position="566"/>
    </location>
</feature>
<feature type="transmembrane region" description="Helical" evidence="2">
    <location>
        <begin position="597"/>
        <end position="617"/>
    </location>
</feature>
<feature type="transmembrane region" description="Helical" evidence="2">
    <location>
        <begin position="623"/>
        <end position="643"/>
    </location>
</feature>
<sequence length="712" mass="81399">MTPESLLASASINIGLAVVALWLFSVLKKQPRNAVVYYARRLSDRHHHRPLSLHSSLCLPRFLPSVAWIPRAFRVPEDEILSRHGLDALVLIRLFKFGIRFFLMCSLLGASLLLPVDYYNESDLPTRREYSMDAFTISNITRGSNKLWVHFSCLWCISFYALFLLHKEYKEILVIRLQQMKELRHRADQFTVLVRQVPLCPEHNTRGCAVDHFFSKHHRFSYHSHQMLYDGRDLEYLLGKQKKLKKELEDKRHTEILSNGSQEHKQISTSEEKLREITHMIYHLQSETMLREKELPVAFVTFKSRRNAALAAQTQQHSNPLELITEMAPEPRDVSWRNLAIPQKILPLNKIGVILAAALLTIFFAIPVTAVQGIAKYEKLKKWFPPAMAIEFIPGLSSVVTGYLPSAILKGFMYIIPFAMLGLAYLGGSISNSKEEIKACNMVFYFLMGNVFFLSLISGSLLDEIGEYLTHPRDIPSHLAAAVSAQAEFFMTYILTDGLSGFSLEILQLGLILFDIIRSYTYGRGKERTPYLFSFPYFRVIPTVSLSIMIGMIYAVVAPLMLPFLVGYFCLGYIVYFNQMEDVYETTYDTCGRFWPFIHHYIFVSIILMQITMVGLFGLKSKPSAAIATVPLILITIAYNEYCKIRFLPSFKHFPIQTAVEIDEEDEKNGEMETHYVDAATAYNRHQPCLERVSSAESPTNLSQPLLGTDSI</sequence>
<comment type="function">
    <text evidence="1">Acts as an osmosensitive calcium-permeable cation channel.</text>
</comment>
<comment type="subcellular location">
    <subcellularLocation>
        <location evidence="4">Membrane</location>
        <topology evidence="4">Multi-pass membrane protein</topology>
    </subcellularLocation>
</comment>
<comment type="alternative products">
    <event type="alternative splicing"/>
    <isoform>
        <id>F4JCY2-1</id>
        <name>1</name>
        <sequence type="displayed"/>
    </isoform>
    <text>A number of isoforms are produced. According to EST sequences.</text>
</comment>
<comment type="similarity">
    <text evidence="4">Belongs to the CSC1 (TC 1.A.17) family.</text>
</comment>
<comment type="sequence caution" evidence="4">
    <conflict type="erroneous gene model prediction">
        <sequence resource="EMBL-CDS" id="CAB77571"/>
    </conflict>
</comment>
<gene>
    <name evidence="3" type="primary">OSCA2.5</name>
    <name type="ordered locus">At3g54510</name>
    <name type="ORF">T14E10_80</name>
</gene>
<evidence type="ECO:0000250" key="1">
    <source>
        <dbReference type="UniProtKB" id="Q5XEZ5"/>
    </source>
</evidence>
<evidence type="ECO:0000255" key="2"/>
<evidence type="ECO:0000303" key="3">
    <source>
    </source>
</evidence>
<evidence type="ECO:0000305" key="4"/>
<organism>
    <name type="scientific">Arabidopsis thaliana</name>
    <name type="common">Mouse-ear cress</name>
    <dbReference type="NCBI Taxonomy" id="3702"/>
    <lineage>
        <taxon>Eukaryota</taxon>
        <taxon>Viridiplantae</taxon>
        <taxon>Streptophyta</taxon>
        <taxon>Embryophyta</taxon>
        <taxon>Tracheophyta</taxon>
        <taxon>Spermatophyta</taxon>
        <taxon>Magnoliopsida</taxon>
        <taxon>eudicotyledons</taxon>
        <taxon>Gunneridae</taxon>
        <taxon>Pentapetalae</taxon>
        <taxon>rosids</taxon>
        <taxon>malvids</taxon>
        <taxon>Brassicales</taxon>
        <taxon>Brassicaceae</taxon>
        <taxon>Camelineae</taxon>
        <taxon>Arabidopsis</taxon>
    </lineage>
</organism>
<keyword id="KW-0025">Alternative splicing</keyword>
<keyword id="KW-0106">Calcium</keyword>
<keyword id="KW-0407">Ion channel</keyword>
<keyword id="KW-0406">Ion transport</keyword>
<keyword id="KW-0472">Membrane</keyword>
<keyword id="KW-1185">Reference proteome</keyword>
<keyword id="KW-0812">Transmembrane</keyword>
<keyword id="KW-1133">Transmembrane helix</keyword>
<keyword id="KW-0813">Transport</keyword>
<name>OSC25_ARATH</name>